<evidence type="ECO:0000250" key="1"/>
<evidence type="ECO:0000250" key="2">
    <source>
        <dbReference type="UniProtKB" id="P60893"/>
    </source>
</evidence>
<evidence type="ECO:0000255" key="3"/>
<evidence type="ECO:0000255" key="4">
    <source>
        <dbReference type="PROSITE-ProRule" id="PRU00521"/>
    </source>
</evidence>
<keyword id="KW-1003">Cell membrane</keyword>
<keyword id="KW-1015">Disulfide bond</keyword>
<keyword id="KW-0256">Endoplasmic reticulum</keyword>
<keyword id="KW-0297">G-protein coupled receptor</keyword>
<keyword id="KW-0325">Glycoprotein</keyword>
<keyword id="KW-0472">Membrane</keyword>
<keyword id="KW-0675">Receptor</keyword>
<keyword id="KW-1185">Reference proteome</keyword>
<keyword id="KW-0807">Transducer</keyword>
<keyword id="KW-0812">Transmembrane</keyword>
<keyword id="KW-1133">Transmembrane helix</keyword>
<accession>P60895</accession>
<accession>Q9JHI6</accession>
<accession>Q9NPD1</accession>
<gene>
    <name type="primary">Gpr85</name>
    <name type="synonym">Sreb2</name>
</gene>
<dbReference type="EMBL" id="AB040803">
    <property type="protein sequence ID" value="BAA96649.1"/>
    <property type="molecule type" value="mRNA"/>
</dbReference>
<dbReference type="EMBL" id="AF203907">
    <property type="protein sequence ID" value="AAG42284.1"/>
    <property type="molecule type" value="mRNA"/>
</dbReference>
<dbReference type="EMBL" id="BC087727">
    <property type="protein sequence ID" value="AAH87727.1"/>
    <property type="molecule type" value="mRNA"/>
</dbReference>
<dbReference type="RefSeq" id="NP_071590.1">
    <property type="nucleotide sequence ID" value="NM_022254.4"/>
</dbReference>
<dbReference type="RefSeq" id="XP_006236186.1">
    <property type="nucleotide sequence ID" value="XM_006236124.5"/>
</dbReference>
<dbReference type="RefSeq" id="XP_006236188.1">
    <property type="nucleotide sequence ID" value="XM_006236126.5"/>
</dbReference>
<dbReference type="RefSeq" id="XP_017448349.1">
    <property type="nucleotide sequence ID" value="XM_017592860.3"/>
</dbReference>
<dbReference type="RefSeq" id="XP_017448350.1">
    <property type="nucleotide sequence ID" value="XM_017592861.3"/>
</dbReference>
<dbReference type="SMR" id="P60895"/>
<dbReference type="FunCoup" id="P60895">
    <property type="interactions" value="1718"/>
</dbReference>
<dbReference type="STRING" id="10116.ENSRNOP00000031780"/>
<dbReference type="GlyCosmos" id="P60895">
    <property type="glycosylation" value="3 sites, No reported glycans"/>
</dbReference>
<dbReference type="GlyGen" id="P60895">
    <property type="glycosylation" value="4 sites"/>
</dbReference>
<dbReference type="PhosphoSitePlus" id="P60895"/>
<dbReference type="PaxDb" id="10116-ENSRNOP00000031780"/>
<dbReference type="Ensembl" id="ENSRNOT00000039005.6">
    <property type="protein sequence ID" value="ENSRNOP00000031780.3"/>
    <property type="gene ID" value="ENSRNOG00000024636.6"/>
</dbReference>
<dbReference type="Ensembl" id="ENSRNOT00000100667.1">
    <property type="protein sequence ID" value="ENSRNOP00000084618.1"/>
    <property type="gene ID" value="ENSRNOG00000024636.6"/>
</dbReference>
<dbReference type="GeneID" id="64020"/>
<dbReference type="KEGG" id="rno:64020"/>
<dbReference type="UCSC" id="RGD:71011">
    <property type="organism name" value="rat"/>
</dbReference>
<dbReference type="AGR" id="RGD:71011"/>
<dbReference type="CTD" id="54329"/>
<dbReference type="RGD" id="71011">
    <property type="gene designation" value="Gpr85"/>
</dbReference>
<dbReference type="eggNOG" id="KOG3656">
    <property type="taxonomic scope" value="Eukaryota"/>
</dbReference>
<dbReference type="GeneTree" id="ENSGT00890000139436"/>
<dbReference type="HOGENOM" id="CLU_055518_0_0_1"/>
<dbReference type="InParanoid" id="P60895"/>
<dbReference type="OMA" id="WCPYLVA"/>
<dbReference type="OrthoDB" id="6129346at2759"/>
<dbReference type="PhylomeDB" id="P60895"/>
<dbReference type="TreeFam" id="TF331163"/>
<dbReference type="PRO" id="PR:P60895"/>
<dbReference type="Proteomes" id="UP000002494">
    <property type="component" value="Chromosome 4"/>
</dbReference>
<dbReference type="Bgee" id="ENSRNOG00000024636">
    <property type="expression patterns" value="Expressed in Ammon's horn and 8 other cell types or tissues"/>
</dbReference>
<dbReference type="GO" id="GO:0005783">
    <property type="term" value="C:endoplasmic reticulum"/>
    <property type="evidence" value="ECO:0000250"/>
    <property type="project" value="UniProtKB"/>
</dbReference>
<dbReference type="GO" id="GO:0005886">
    <property type="term" value="C:plasma membrane"/>
    <property type="evidence" value="ECO:0000318"/>
    <property type="project" value="GO_Central"/>
</dbReference>
<dbReference type="GO" id="GO:0004930">
    <property type="term" value="F:G protein-coupled receptor activity"/>
    <property type="evidence" value="ECO:0000318"/>
    <property type="project" value="GO_Central"/>
</dbReference>
<dbReference type="CDD" id="cd15218">
    <property type="entry name" value="7tmA_SREB2_GPR85"/>
    <property type="match status" value="1"/>
</dbReference>
<dbReference type="FunFam" id="1.20.1070.10:FF:000074">
    <property type="entry name" value="probable G-protein coupled receptor 173"/>
    <property type="match status" value="1"/>
</dbReference>
<dbReference type="Gene3D" id="1.20.1070.10">
    <property type="entry name" value="Rhodopsin 7-helix transmembrane proteins"/>
    <property type="match status" value="1"/>
</dbReference>
<dbReference type="InterPro" id="IPR051509">
    <property type="entry name" value="GPCR_Orphan/Phoenixin"/>
</dbReference>
<dbReference type="InterPro" id="IPR000276">
    <property type="entry name" value="GPCR_Rhodpsn"/>
</dbReference>
<dbReference type="InterPro" id="IPR017452">
    <property type="entry name" value="GPCR_Rhodpsn_7TM"/>
</dbReference>
<dbReference type="PANTHER" id="PTHR19268">
    <property type="entry name" value="G PROTEIN-COUPLED RECEPTOR"/>
    <property type="match status" value="1"/>
</dbReference>
<dbReference type="PANTHER" id="PTHR19268:SF7">
    <property type="entry name" value="G-PROTEIN COUPLED RECEPTOR 85-RELATED"/>
    <property type="match status" value="1"/>
</dbReference>
<dbReference type="Pfam" id="PF00001">
    <property type="entry name" value="7tm_1"/>
    <property type="match status" value="1"/>
</dbReference>
<dbReference type="PRINTS" id="PR00237">
    <property type="entry name" value="GPCRRHODOPSN"/>
</dbReference>
<dbReference type="SUPFAM" id="SSF81321">
    <property type="entry name" value="Family A G protein-coupled receptor-like"/>
    <property type="match status" value="1"/>
</dbReference>
<dbReference type="PROSITE" id="PS50262">
    <property type="entry name" value="G_PROTEIN_RECEP_F1_2"/>
    <property type="match status" value="1"/>
</dbReference>
<proteinExistence type="evidence at transcript level"/>
<organism>
    <name type="scientific">Rattus norvegicus</name>
    <name type="common">Rat</name>
    <dbReference type="NCBI Taxonomy" id="10116"/>
    <lineage>
        <taxon>Eukaryota</taxon>
        <taxon>Metazoa</taxon>
        <taxon>Chordata</taxon>
        <taxon>Craniata</taxon>
        <taxon>Vertebrata</taxon>
        <taxon>Euteleostomi</taxon>
        <taxon>Mammalia</taxon>
        <taxon>Eutheria</taxon>
        <taxon>Euarchontoglires</taxon>
        <taxon>Glires</taxon>
        <taxon>Rodentia</taxon>
        <taxon>Myomorpha</taxon>
        <taxon>Muroidea</taxon>
        <taxon>Muridae</taxon>
        <taxon>Murinae</taxon>
        <taxon>Rattus</taxon>
    </lineage>
</organism>
<name>GPR85_RAT</name>
<comment type="function">
    <text>Orphan receptor.</text>
</comment>
<comment type="subunit">
    <text evidence="2">Interacts with DLG4 and DLG3.</text>
</comment>
<comment type="subcellular location">
    <subcellularLocation>
        <location evidence="1">Cell membrane</location>
        <topology evidence="1">Multi-pass membrane protein</topology>
    </subcellularLocation>
    <subcellularLocation>
        <location evidence="2">Endoplasmic reticulum</location>
    </subcellularLocation>
</comment>
<comment type="similarity">
    <text evidence="4">Belongs to the G-protein coupled receptor 1 family.</text>
</comment>
<reference key="1">
    <citation type="journal article" date="2000" name="Biochem. Biophys. Res. Commun.">
        <title>An evolutionarily conserved G-protein coupled receptor family, SREB, expressed in the central nervous system.</title>
        <authorList>
            <person name="Matsumoto M."/>
            <person name="Saito T."/>
            <person name="Takasaki J."/>
            <person name="Kamohara M."/>
            <person name="Sugimoto T."/>
            <person name="Kobayashi M."/>
            <person name="Tadokoro M."/>
            <person name="Matsumoto S."/>
            <person name="Ohishi T."/>
            <person name="Furuichi K."/>
        </authorList>
    </citation>
    <scope>NUCLEOTIDE SEQUENCE [MRNA]</scope>
    <source>
        <tissue>Brain</tissue>
    </source>
</reference>
<reference key="2">
    <citation type="submission" date="1999-11" db="EMBL/GenBank/DDBJ databases">
        <authorList>
            <person name="Kim H."/>
            <person name="Park S."/>
            <person name="Kang Y."/>
            <person name="Kim C."/>
            <person name="Jeon J."/>
        </authorList>
    </citation>
    <scope>NUCLEOTIDE SEQUENCE [MRNA]</scope>
    <source>
        <strain>Sprague-Dawley</strain>
    </source>
</reference>
<reference key="3">
    <citation type="journal article" date="2004" name="Genome Res.">
        <title>The status, quality, and expansion of the NIH full-length cDNA project: the Mammalian Gene Collection (MGC).</title>
        <authorList>
            <consortium name="The MGC Project Team"/>
        </authorList>
    </citation>
    <scope>NUCLEOTIDE SEQUENCE [LARGE SCALE MRNA]</scope>
    <source>
        <tissue>Brain</tissue>
    </source>
</reference>
<feature type="chain" id="PRO_0000069593" description="Probable G-protein coupled receptor 85">
    <location>
        <begin position="1"/>
        <end position="370"/>
    </location>
</feature>
<feature type="topological domain" description="Extracellular" evidence="3">
    <location>
        <begin position="1"/>
        <end position="25"/>
    </location>
</feature>
<feature type="transmembrane region" description="Helical; Name=1" evidence="3">
    <location>
        <begin position="26"/>
        <end position="46"/>
    </location>
</feature>
<feature type="topological domain" description="Cytoplasmic" evidence="3">
    <location>
        <begin position="47"/>
        <end position="57"/>
    </location>
</feature>
<feature type="transmembrane region" description="Helical; Name=2" evidence="3">
    <location>
        <begin position="58"/>
        <end position="78"/>
    </location>
</feature>
<feature type="topological domain" description="Extracellular" evidence="3">
    <location>
        <begin position="79"/>
        <end position="96"/>
    </location>
</feature>
<feature type="transmembrane region" description="Helical; Name=3" evidence="3">
    <location>
        <begin position="97"/>
        <end position="117"/>
    </location>
</feature>
<feature type="topological domain" description="Cytoplasmic" evidence="3">
    <location>
        <begin position="118"/>
        <end position="137"/>
    </location>
</feature>
<feature type="transmembrane region" description="Helical; Name=4" evidence="3">
    <location>
        <begin position="138"/>
        <end position="158"/>
    </location>
</feature>
<feature type="topological domain" description="Extracellular" evidence="3">
    <location>
        <begin position="159"/>
        <end position="188"/>
    </location>
</feature>
<feature type="transmembrane region" description="Helical; Name=5" evidence="3">
    <location>
        <begin position="189"/>
        <end position="209"/>
    </location>
</feature>
<feature type="topological domain" description="Cytoplasmic" evidence="3">
    <location>
        <begin position="210"/>
        <end position="286"/>
    </location>
</feature>
<feature type="transmembrane region" description="Helical; Name=6" evidence="3">
    <location>
        <begin position="287"/>
        <end position="307"/>
    </location>
</feature>
<feature type="topological domain" description="Extracellular" evidence="3">
    <location>
        <begin position="308"/>
        <end position="313"/>
    </location>
</feature>
<feature type="transmembrane region" description="Helical; Name=7" evidence="3">
    <location>
        <begin position="314"/>
        <end position="334"/>
    </location>
</feature>
<feature type="topological domain" description="Cytoplasmic" evidence="3">
    <location>
        <begin position="335"/>
        <end position="370"/>
    </location>
</feature>
<feature type="glycosylation site" description="N-linked (GlcNAc...) asparagine" evidence="3">
    <location>
        <position position="3"/>
    </location>
</feature>
<feature type="glycosylation site" description="N-linked (GlcNAc...) asparagine" evidence="3">
    <location>
        <position position="83"/>
    </location>
</feature>
<feature type="glycosylation site" description="N-linked (GlcNAc...) asparagine" evidence="3">
    <location>
        <position position="182"/>
    </location>
</feature>
<feature type="disulfide bond" evidence="4">
    <location>
        <begin position="94"/>
        <end position="172"/>
    </location>
</feature>
<sequence>MANYSHAADNILQNLSPLTAFLKLTSLGFIIGVSVVGNLLISILLVKDKTLHRAPYYFLLDLCCSDILRSAICFPFVFNSVKNGSTWTYGTLTCKVIAFLGVLSCFHTAFMLFCISVTRYLAIAHHRFYTKRLTFWTCLAVICMVWTLSVAMAFPPVLDVGTYSFIREEDQCTFQHRSFRANDSLGFMLLLALILLATQLVYLKLIFFVHDRRKMKPVQFVAAVSQNWTFHGPGASGQAAANWLAGFGRGPTPPTLLGIRQNANTTGRRRLLVLDEFKMEKRISRMFYIMTFLFLTLWGPYLVACYWRVFARGPVVPGGFLTAAVWMSFAQAGINPFVCIFSNRELRRCFSTTLLYCRKSRLPREPYCVI</sequence>
<protein>
    <recommendedName>
        <fullName>Probable G-protein coupled receptor 85</fullName>
    </recommendedName>
    <alternativeName>
        <fullName>PKrCx1</fullName>
    </alternativeName>
    <alternativeName>
        <fullName>Super conserved receptor expressed in brain 2</fullName>
    </alternativeName>
</protein>